<feature type="chain" id="PRO_0000125269" description="Large ribosomal subunit protein uL22">
    <location>
        <begin position="1"/>
        <end position="110"/>
    </location>
</feature>
<organism>
    <name type="scientific">Yersinia pestis</name>
    <dbReference type="NCBI Taxonomy" id="632"/>
    <lineage>
        <taxon>Bacteria</taxon>
        <taxon>Pseudomonadati</taxon>
        <taxon>Pseudomonadota</taxon>
        <taxon>Gammaproteobacteria</taxon>
        <taxon>Enterobacterales</taxon>
        <taxon>Yersiniaceae</taxon>
        <taxon>Yersinia</taxon>
    </lineage>
</organism>
<proteinExistence type="inferred from homology"/>
<comment type="function">
    <text evidence="1">This protein binds specifically to 23S rRNA; its binding is stimulated by other ribosomal proteins, e.g. L4, L17, and L20. It is important during the early stages of 50S assembly. It makes multiple contacts with different domains of the 23S rRNA in the assembled 50S subunit and ribosome (By similarity).</text>
</comment>
<comment type="function">
    <text evidence="1">The globular domain of the protein is located near the polypeptide exit tunnel on the outside of the subunit, while an extended beta-hairpin is found that lines the wall of the exit tunnel in the center of the 70S ribosome.</text>
</comment>
<comment type="subunit">
    <text evidence="1">Part of the 50S ribosomal subunit.</text>
</comment>
<comment type="similarity">
    <text evidence="1">Belongs to the universal ribosomal protein uL22 family.</text>
</comment>
<protein>
    <recommendedName>
        <fullName evidence="1">Large ribosomal subunit protein uL22</fullName>
    </recommendedName>
    <alternativeName>
        <fullName evidence="2">50S ribosomal protein L22</fullName>
    </alternativeName>
</protein>
<keyword id="KW-1185">Reference proteome</keyword>
<keyword id="KW-0687">Ribonucleoprotein</keyword>
<keyword id="KW-0689">Ribosomal protein</keyword>
<keyword id="KW-0694">RNA-binding</keyword>
<keyword id="KW-0699">rRNA-binding</keyword>
<gene>
    <name evidence="1" type="primary">rplV</name>
    <name type="ordered locus">YPO0215</name>
    <name type="ordered locus">y3994</name>
    <name type="ordered locus">YP_0212</name>
</gene>
<reference key="1">
    <citation type="journal article" date="2001" name="Nature">
        <title>Genome sequence of Yersinia pestis, the causative agent of plague.</title>
        <authorList>
            <person name="Parkhill J."/>
            <person name="Wren B.W."/>
            <person name="Thomson N.R."/>
            <person name="Titball R.W."/>
            <person name="Holden M.T.G."/>
            <person name="Prentice M.B."/>
            <person name="Sebaihia M."/>
            <person name="James K.D."/>
            <person name="Churcher C.M."/>
            <person name="Mungall K.L."/>
            <person name="Baker S."/>
            <person name="Basham D."/>
            <person name="Bentley S.D."/>
            <person name="Brooks K."/>
            <person name="Cerdeno-Tarraga A.-M."/>
            <person name="Chillingworth T."/>
            <person name="Cronin A."/>
            <person name="Davies R.M."/>
            <person name="Davis P."/>
            <person name="Dougan G."/>
            <person name="Feltwell T."/>
            <person name="Hamlin N."/>
            <person name="Holroyd S."/>
            <person name="Jagels K."/>
            <person name="Karlyshev A.V."/>
            <person name="Leather S."/>
            <person name="Moule S."/>
            <person name="Oyston P.C.F."/>
            <person name="Quail M.A."/>
            <person name="Rutherford K.M."/>
            <person name="Simmonds M."/>
            <person name="Skelton J."/>
            <person name="Stevens K."/>
            <person name="Whitehead S."/>
            <person name="Barrell B.G."/>
        </authorList>
    </citation>
    <scope>NUCLEOTIDE SEQUENCE [LARGE SCALE GENOMIC DNA]</scope>
    <source>
        <strain>CO-92 / Biovar Orientalis</strain>
    </source>
</reference>
<reference key="2">
    <citation type="journal article" date="2002" name="J. Bacteriol.">
        <title>Genome sequence of Yersinia pestis KIM.</title>
        <authorList>
            <person name="Deng W."/>
            <person name="Burland V."/>
            <person name="Plunkett G. III"/>
            <person name="Boutin A."/>
            <person name="Mayhew G.F."/>
            <person name="Liss P."/>
            <person name="Perna N.T."/>
            <person name="Rose D.J."/>
            <person name="Mau B."/>
            <person name="Zhou S."/>
            <person name="Schwartz D.C."/>
            <person name="Fetherston J.D."/>
            <person name="Lindler L.E."/>
            <person name="Brubaker R.R."/>
            <person name="Plano G.V."/>
            <person name="Straley S.C."/>
            <person name="McDonough K.A."/>
            <person name="Nilles M.L."/>
            <person name="Matson J.S."/>
            <person name="Blattner F.R."/>
            <person name="Perry R.D."/>
        </authorList>
    </citation>
    <scope>NUCLEOTIDE SEQUENCE [LARGE SCALE GENOMIC DNA]</scope>
    <source>
        <strain>KIM10+ / Biovar Mediaevalis</strain>
    </source>
</reference>
<reference key="3">
    <citation type="journal article" date="2004" name="DNA Res.">
        <title>Complete genome sequence of Yersinia pestis strain 91001, an isolate avirulent to humans.</title>
        <authorList>
            <person name="Song Y."/>
            <person name="Tong Z."/>
            <person name="Wang J."/>
            <person name="Wang L."/>
            <person name="Guo Z."/>
            <person name="Han Y."/>
            <person name="Zhang J."/>
            <person name="Pei D."/>
            <person name="Zhou D."/>
            <person name="Qin H."/>
            <person name="Pang X."/>
            <person name="Han Y."/>
            <person name="Zhai J."/>
            <person name="Li M."/>
            <person name="Cui B."/>
            <person name="Qi Z."/>
            <person name="Jin L."/>
            <person name="Dai R."/>
            <person name="Chen F."/>
            <person name="Li S."/>
            <person name="Ye C."/>
            <person name="Du Z."/>
            <person name="Lin W."/>
            <person name="Wang J."/>
            <person name="Yu J."/>
            <person name="Yang H."/>
            <person name="Wang J."/>
            <person name="Huang P."/>
            <person name="Yang R."/>
        </authorList>
    </citation>
    <scope>NUCLEOTIDE SEQUENCE [LARGE SCALE GENOMIC DNA]</scope>
    <source>
        <strain>91001 / Biovar Mediaevalis</strain>
    </source>
</reference>
<accession>Q8ZJA7</accession>
<accession>Q0WK93</accession>
<accession>Q74XZ1</accession>
<accession>Q7CFT9</accession>
<dbReference type="EMBL" id="AL590842">
    <property type="protein sequence ID" value="CAL18897.1"/>
    <property type="molecule type" value="Genomic_DNA"/>
</dbReference>
<dbReference type="EMBL" id="AE009952">
    <property type="protein sequence ID" value="AAM87538.1"/>
    <property type="molecule type" value="Genomic_DNA"/>
</dbReference>
<dbReference type="EMBL" id="AE017042">
    <property type="protein sequence ID" value="AAS60488.1"/>
    <property type="molecule type" value="Genomic_DNA"/>
</dbReference>
<dbReference type="PIR" id="AG0026">
    <property type="entry name" value="AG0026"/>
</dbReference>
<dbReference type="RefSeq" id="WP_002223844.1">
    <property type="nucleotide sequence ID" value="NZ_WUCL01000071.1"/>
</dbReference>
<dbReference type="RefSeq" id="YP_002345295.1">
    <property type="nucleotide sequence ID" value="NC_003143.1"/>
</dbReference>
<dbReference type="SMR" id="Q8ZJA7"/>
<dbReference type="STRING" id="214092.YPO0215"/>
<dbReference type="PaxDb" id="214092-YPO0215"/>
<dbReference type="DNASU" id="1148941"/>
<dbReference type="EnsemblBacteria" id="AAS60488">
    <property type="protein sequence ID" value="AAS60488"/>
    <property type="gene ID" value="YP_0212"/>
</dbReference>
<dbReference type="GeneID" id="98190601"/>
<dbReference type="KEGG" id="ype:YPO0215"/>
<dbReference type="KEGG" id="ypk:y3994"/>
<dbReference type="KEGG" id="ypm:YP_0212"/>
<dbReference type="PATRIC" id="fig|214092.21.peg.444"/>
<dbReference type="eggNOG" id="COG0091">
    <property type="taxonomic scope" value="Bacteria"/>
</dbReference>
<dbReference type="HOGENOM" id="CLU_083987_3_3_6"/>
<dbReference type="OMA" id="KRIQPRA"/>
<dbReference type="OrthoDB" id="9805969at2"/>
<dbReference type="Proteomes" id="UP000000815">
    <property type="component" value="Chromosome"/>
</dbReference>
<dbReference type="Proteomes" id="UP000001019">
    <property type="component" value="Chromosome"/>
</dbReference>
<dbReference type="Proteomes" id="UP000002490">
    <property type="component" value="Chromosome"/>
</dbReference>
<dbReference type="GO" id="GO:0022625">
    <property type="term" value="C:cytosolic large ribosomal subunit"/>
    <property type="evidence" value="ECO:0000318"/>
    <property type="project" value="GO_Central"/>
</dbReference>
<dbReference type="GO" id="GO:0019843">
    <property type="term" value="F:rRNA binding"/>
    <property type="evidence" value="ECO:0007669"/>
    <property type="project" value="UniProtKB-UniRule"/>
</dbReference>
<dbReference type="GO" id="GO:0003735">
    <property type="term" value="F:structural constituent of ribosome"/>
    <property type="evidence" value="ECO:0000318"/>
    <property type="project" value="GO_Central"/>
</dbReference>
<dbReference type="GO" id="GO:0006412">
    <property type="term" value="P:translation"/>
    <property type="evidence" value="ECO:0000318"/>
    <property type="project" value="GO_Central"/>
</dbReference>
<dbReference type="CDD" id="cd00336">
    <property type="entry name" value="Ribosomal_L22"/>
    <property type="match status" value="1"/>
</dbReference>
<dbReference type="FunFam" id="3.90.470.10:FF:000001">
    <property type="entry name" value="50S ribosomal protein L22"/>
    <property type="match status" value="1"/>
</dbReference>
<dbReference type="Gene3D" id="3.90.470.10">
    <property type="entry name" value="Ribosomal protein L22/L17"/>
    <property type="match status" value="1"/>
</dbReference>
<dbReference type="HAMAP" id="MF_01331_B">
    <property type="entry name" value="Ribosomal_uL22_B"/>
    <property type="match status" value="1"/>
</dbReference>
<dbReference type="InterPro" id="IPR001063">
    <property type="entry name" value="Ribosomal_uL22"/>
</dbReference>
<dbReference type="InterPro" id="IPR005727">
    <property type="entry name" value="Ribosomal_uL22_bac/chlpt-type"/>
</dbReference>
<dbReference type="InterPro" id="IPR047867">
    <property type="entry name" value="Ribosomal_uL22_bac/org-type"/>
</dbReference>
<dbReference type="InterPro" id="IPR018260">
    <property type="entry name" value="Ribosomal_uL22_CS"/>
</dbReference>
<dbReference type="InterPro" id="IPR036394">
    <property type="entry name" value="Ribosomal_uL22_sf"/>
</dbReference>
<dbReference type="NCBIfam" id="TIGR01044">
    <property type="entry name" value="rplV_bact"/>
    <property type="match status" value="1"/>
</dbReference>
<dbReference type="PANTHER" id="PTHR13501">
    <property type="entry name" value="CHLOROPLAST 50S RIBOSOMAL PROTEIN L22-RELATED"/>
    <property type="match status" value="1"/>
</dbReference>
<dbReference type="PANTHER" id="PTHR13501:SF8">
    <property type="entry name" value="LARGE RIBOSOMAL SUBUNIT PROTEIN UL22M"/>
    <property type="match status" value="1"/>
</dbReference>
<dbReference type="Pfam" id="PF00237">
    <property type="entry name" value="Ribosomal_L22"/>
    <property type="match status" value="1"/>
</dbReference>
<dbReference type="SUPFAM" id="SSF54843">
    <property type="entry name" value="Ribosomal protein L22"/>
    <property type="match status" value="1"/>
</dbReference>
<dbReference type="PROSITE" id="PS00464">
    <property type="entry name" value="RIBOSOMAL_L22"/>
    <property type="match status" value="1"/>
</dbReference>
<sequence length="110" mass="12186">METIAKHRHARSSAQKVRLVADLIRGKKVSQALETLTYTNKKAAGLVKKVLESAIANAEHNDGADIDDLKVTKIFVDEGPSMKRIMPRAKGRADRILKRTSHITVVVSDR</sequence>
<name>RL22_YERPE</name>
<evidence type="ECO:0000255" key="1">
    <source>
        <dbReference type="HAMAP-Rule" id="MF_01331"/>
    </source>
</evidence>
<evidence type="ECO:0000305" key="2"/>